<protein>
    <recommendedName>
        <fullName>UPF0177 protein YbdJ</fullName>
    </recommendedName>
</protein>
<sequence length="226" mass="26607">MIERIKKFLRTKFKPLLLLLVTVILYNGWTPHLGIFPPTFYDFAFNYYGFVDILTFLVIIVIAYKNDAFKKIFDIFRPKNLLFILFFIVGGNIFIALAHHLYFQMTPALEAFPEHSIDLANYFARTPFWTHSLDLFVIGPISEELIYREYLYRLFDKKCLACFVSVTMFAWVHTGFTYSFFLYLPISLVVTLAYHRRKAIGESIALHSSINLINTYLPNLLSFWVF</sequence>
<feature type="chain" id="PRO_0000220579" description="UPF0177 protein YbdJ">
    <location>
        <begin position="1"/>
        <end position="226"/>
    </location>
</feature>
<feature type="transmembrane region" description="Helical" evidence="1">
    <location>
        <begin position="16"/>
        <end position="36"/>
    </location>
</feature>
<feature type="transmembrane region" description="Helical" evidence="1">
    <location>
        <begin position="43"/>
        <end position="63"/>
    </location>
</feature>
<feature type="transmembrane region" description="Helical" evidence="1">
    <location>
        <begin position="81"/>
        <end position="101"/>
    </location>
</feature>
<feature type="transmembrane region" description="Helical" evidence="1">
    <location>
        <begin position="169"/>
        <end position="189"/>
    </location>
</feature>
<feature type="transmembrane region" description="Helical" evidence="1">
    <location>
        <begin position="206"/>
        <end position="226"/>
    </location>
</feature>
<proteinExistence type="inferred from homology"/>
<keyword id="KW-1003">Cell membrane</keyword>
<keyword id="KW-0472">Membrane</keyword>
<keyword id="KW-1185">Reference proteome</keyword>
<keyword id="KW-0812">Transmembrane</keyword>
<keyword id="KW-1133">Transmembrane helix</keyword>
<gene>
    <name type="primary">ybdJ</name>
    <name type="ordered locus">LL0135</name>
    <name type="ORF">L136552</name>
</gene>
<dbReference type="EMBL" id="AE005176">
    <property type="protein sequence ID" value="AAK04233.1"/>
    <property type="molecule type" value="Genomic_DNA"/>
</dbReference>
<dbReference type="PIR" id="G86641">
    <property type="entry name" value="G86641"/>
</dbReference>
<dbReference type="RefSeq" id="NP_266291.1">
    <property type="nucleotide sequence ID" value="NC_002662.1"/>
</dbReference>
<dbReference type="RefSeq" id="WP_010905145.1">
    <property type="nucleotide sequence ID" value="NC_002662.1"/>
</dbReference>
<dbReference type="PaxDb" id="272623-L136552"/>
<dbReference type="EnsemblBacteria" id="AAK04233">
    <property type="protein sequence ID" value="AAK04233"/>
    <property type="gene ID" value="L136552"/>
</dbReference>
<dbReference type="KEGG" id="lla:L136552"/>
<dbReference type="PATRIC" id="fig|272623.7.peg.150"/>
<dbReference type="eggNOG" id="COG1266">
    <property type="taxonomic scope" value="Bacteria"/>
</dbReference>
<dbReference type="HOGENOM" id="CLU_1281856_0_0_9"/>
<dbReference type="OrthoDB" id="8607342at2"/>
<dbReference type="Proteomes" id="UP000002196">
    <property type="component" value="Chromosome"/>
</dbReference>
<dbReference type="GO" id="GO:0005886">
    <property type="term" value="C:plasma membrane"/>
    <property type="evidence" value="ECO:0007669"/>
    <property type="project" value="UniProtKB-SubCell"/>
</dbReference>
<dbReference type="GO" id="GO:0004175">
    <property type="term" value="F:endopeptidase activity"/>
    <property type="evidence" value="ECO:0007669"/>
    <property type="project" value="UniProtKB-ARBA"/>
</dbReference>
<dbReference type="GO" id="GO:0080120">
    <property type="term" value="P:CAAX-box protein maturation"/>
    <property type="evidence" value="ECO:0007669"/>
    <property type="project" value="UniProtKB-ARBA"/>
</dbReference>
<dbReference type="InterPro" id="IPR003675">
    <property type="entry name" value="Rce1/LyrA-like_dom"/>
</dbReference>
<dbReference type="Pfam" id="PF02517">
    <property type="entry name" value="Rce1-like"/>
    <property type="match status" value="1"/>
</dbReference>
<name>YBDJ_LACLA</name>
<accession>Q9CJ66</accession>
<organism>
    <name type="scientific">Lactococcus lactis subsp. lactis (strain IL1403)</name>
    <name type="common">Streptococcus lactis</name>
    <dbReference type="NCBI Taxonomy" id="272623"/>
    <lineage>
        <taxon>Bacteria</taxon>
        <taxon>Bacillati</taxon>
        <taxon>Bacillota</taxon>
        <taxon>Bacilli</taxon>
        <taxon>Lactobacillales</taxon>
        <taxon>Streptococcaceae</taxon>
        <taxon>Lactococcus</taxon>
    </lineage>
</organism>
<comment type="subcellular location">
    <subcellularLocation>
        <location evidence="2">Cell membrane</location>
        <topology evidence="2">Multi-pass membrane protein</topology>
    </subcellularLocation>
</comment>
<comment type="similarity">
    <text evidence="2">Belongs to the UPF0177 family.</text>
</comment>
<evidence type="ECO:0000255" key="1"/>
<evidence type="ECO:0000305" key="2"/>
<reference key="1">
    <citation type="journal article" date="2001" name="Genome Res.">
        <title>The complete genome sequence of the lactic acid bacterium Lactococcus lactis ssp. lactis IL1403.</title>
        <authorList>
            <person name="Bolotin A."/>
            <person name="Wincker P."/>
            <person name="Mauger S."/>
            <person name="Jaillon O."/>
            <person name="Malarme K."/>
            <person name="Weissenbach J."/>
            <person name="Ehrlich S.D."/>
            <person name="Sorokin A."/>
        </authorList>
    </citation>
    <scope>NUCLEOTIDE SEQUENCE [LARGE SCALE GENOMIC DNA]</scope>
    <source>
        <strain>IL1403</strain>
    </source>
</reference>